<feature type="chain" id="PRO_0000243011" description="Large ribosomal subunit protein uL5">
    <location>
        <begin position="1"/>
        <end position="180"/>
    </location>
</feature>
<name>RL5_LACAC</name>
<proteinExistence type="inferred from homology"/>
<protein>
    <recommendedName>
        <fullName evidence="1">Large ribosomal subunit protein uL5</fullName>
    </recommendedName>
    <alternativeName>
        <fullName evidence="2">50S ribosomal protein L5</fullName>
    </alternativeName>
</protein>
<organism>
    <name type="scientific">Lactobacillus acidophilus (strain ATCC 700396 / NCK56 / N2 / NCFM)</name>
    <dbReference type="NCBI Taxonomy" id="272621"/>
    <lineage>
        <taxon>Bacteria</taxon>
        <taxon>Bacillati</taxon>
        <taxon>Bacillota</taxon>
        <taxon>Bacilli</taxon>
        <taxon>Lactobacillales</taxon>
        <taxon>Lactobacillaceae</taxon>
        <taxon>Lactobacillus</taxon>
    </lineage>
</organism>
<reference key="1">
    <citation type="journal article" date="2005" name="Proc. Natl. Acad. Sci. U.S.A.">
        <title>Complete genome sequence of the probiotic lactic acid bacterium Lactobacillus acidophilus NCFM.</title>
        <authorList>
            <person name="Altermann E."/>
            <person name="Russell W.M."/>
            <person name="Azcarate-Peril M.A."/>
            <person name="Barrangou R."/>
            <person name="Buck B.L."/>
            <person name="McAuliffe O."/>
            <person name="Souther N."/>
            <person name="Dobson A."/>
            <person name="Duong T."/>
            <person name="Callanan M."/>
            <person name="Lick S."/>
            <person name="Hamrick A."/>
            <person name="Cano R."/>
            <person name="Klaenhammer T.R."/>
        </authorList>
    </citation>
    <scope>NUCLEOTIDE SEQUENCE [LARGE SCALE GENOMIC DNA]</scope>
    <source>
        <strain>ATCC 700396 / NCK56 / N2 / NCFM</strain>
    </source>
</reference>
<keyword id="KW-1185">Reference proteome</keyword>
<keyword id="KW-0687">Ribonucleoprotein</keyword>
<keyword id="KW-0689">Ribosomal protein</keyword>
<keyword id="KW-0694">RNA-binding</keyword>
<keyword id="KW-0699">rRNA-binding</keyword>
<keyword id="KW-0820">tRNA-binding</keyword>
<dbReference type="EMBL" id="CP000033">
    <property type="protein sequence ID" value="AAV42196.1"/>
    <property type="molecule type" value="Genomic_DNA"/>
</dbReference>
<dbReference type="RefSeq" id="WP_003549036.1">
    <property type="nucleotide sequence ID" value="NC_006814.3"/>
</dbReference>
<dbReference type="RefSeq" id="YP_193227.1">
    <property type="nucleotide sequence ID" value="NC_006814.3"/>
</dbReference>
<dbReference type="SMR" id="Q5FM78"/>
<dbReference type="STRING" id="272621.LBA0303"/>
<dbReference type="GeneID" id="93290589"/>
<dbReference type="KEGG" id="lac:LBA0303"/>
<dbReference type="PATRIC" id="fig|272621.13.peg.289"/>
<dbReference type="eggNOG" id="COG0094">
    <property type="taxonomic scope" value="Bacteria"/>
</dbReference>
<dbReference type="HOGENOM" id="CLU_061015_2_1_9"/>
<dbReference type="OrthoDB" id="9806626at2"/>
<dbReference type="BioCyc" id="LACI272621:G1G49-297-MONOMER"/>
<dbReference type="Proteomes" id="UP000006381">
    <property type="component" value="Chromosome"/>
</dbReference>
<dbReference type="GO" id="GO:1990904">
    <property type="term" value="C:ribonucleoprotein complex"/>
    <property type="evidence" value="ECO:0007669"/>
    <property type="project" value="UniProtKB-KW"/>
</dbReference>
<dbReference type="GO" id="GO:0005840">
    <property type="term" value="C:ribosome"/>
    <property type="evidence" value="ECO:0007669"/>
    <property type="project" value="UniProtKB-KW"/>
</dbReference>
<dbReference type="GO" id="GO:0019843">
    <property type="term" value="F:rRNA binding"/>
    <property type="evidence" value="ECO:0007669"/>
    <property type="project" value="UniProtKB-UniRule"/>
</dbReference>
<dbReference type="GO" id="GO:0003735">
    <property type="term" value="F:structural constituent of ribosome"/>
    <property type="evidence" value="ECO:0007669"/>
    <property type="project" value="InterPro"/>
</dbReference>
<dbReference type="GO" id="GO:0000049">
    <property type="term" value="F:tRNA binding"/>
    <property type="evidence" value="ECO:0007669"/>
    <property type="project" value="UniProtKB-UniRule"/>
</dbReference>
<dbReference type="GO" id="GO:0006412">
    <property type="term" value="P:translation"/>
    <property type="evidence" value="ECO:0007669"/>
    <property type="project" value="UniProtKB-UniRule"/>
</dbReference>
<dbReference type="FunFam" id="3.30.1440.10:FF:000001">
    <property type="entry name" value="50S ribosomal protein L5"/>
    <property type="match status" value="1"/>
</dbReference>
<dbReference type="Gene3D" id="3.30.1440.10">
    <property type="match status" value="1"/>
</dbReference>
<dbReference type="HAMAP" id="MF_01333_B">
    <property type="entry name" value="Ribosomal_uL5_B"/>
    <property type="match status" value="1"/>
</dbReference>
<dbReference type="InterPro" id="IPR002132">
    <property type="entry name" value="Ribosomal_uL5"/>
</dbReference>
<dbReference type="InterPro" id="IPR020930">
    <property type="entry name" value="Ribosomal_uL5_bac-type"/>
</dbReference>
<dbReference type="InterPro" id="IPR031309">
    <property type="entry name" value="Ribosomal_uL5_C"/>
</dbReference>
<dbReference type="InterPro" id="IPR020929">
    <property type="entry name" value="Ribosomal_uL5_CS"/>
</dbReference>
<dbReference type="InterPro" id="IPR022803">
    <property type="entry name" value="Ribosomal_uL5_dom_sf"/>
</dbReference>
<dbReference type="InterPro" id="IPR031310">
    <property type="entry name" value="Ribosomal_uL5_N"/>
</dbReference>
<dbReference type="NCBIfam" id="NF000585">
    <property type="entry name" value="PRK00010.1"/>
    <property type="match status" value="1"/>
</dbReference>
<dbReference type="PANTHER" id="PTHR11994">
    <property type="entry name" value="60S RIBOSOMAL PROTEIN L11-RELATED"/>
    <property type="match status" value="1"/>
</dbReference>
<dbReference type="Pfam" id="PF00281">
    <property type="entry name" value="Ribosomal_L5"/>
    <property type="match status" value="1"/>
</dbReference>
<dbReference type="Pfam" id="PF00673">
    <property type="entry name" value="Ribosomal_L5_C"/>
    <property type="match status" value="1"/>
</dbReference>
<dbReference type="PIRSF" id="PIRSF002161">
    <property type="entry name" value="Ribosomal_L5"/>
    <property type="match status" value="1"/>
</dbReference>
<dbReference type="SUPFAM" id="SSF55282">
    <property type="entry name" value="RL5-like"/>
    <property type="match status" value="1"/>
</dbReference>
<dbReference type="PROSITE" id="PS00358">
    <property type="entry name" value="RIBOSOMAL_L5"/>
    <property type="match status" value="1"/>
</dbReference>
<comment type="function">
    <text evidence="1">This is one of the proteins that bind and probably mediate the attachment of the 5S RNA into the large ribosomal subunit, where it forms part of the central protuberance. In the 70S ribosome it contacts protein S13 of the 30S subunit (bridge B1b), connecting the 2 subunits; this bridge is implicated in subunit movement. Contacts the P site tRNA; the 5S rRNA and some of its associated proteins might help stabilize positioning of ribosome-bound tRNAs.</text>
</comment>
<comment type="subunit">
    <text evidence="1">Part of the 50S ribosomal subunit; part of the 5S rRNA/L5/L18/L25 subcomplex. Contacts the 5S rRNA and the P site tRNA. Forms a bridge to the 30S subunit in the 70S ribosome.</text>
</comment>
<comment type="similarity">
    <text evidence="1">Belongs to the universal ribosomal protein uL5 family.</text>
</comment>
<sequence length="180" mass="20264">MASYLAEEYKETVAPALKEKFNYTSSMQIPKIDKIVLNMGVGDAVSNAKNLDEAVEELTLISGQKPLITKAKKSIANFRLREGMSIGAKVTLRGDRMYDFLYKLINVSLPRVRDFRGVSTRSFDGRGNYTLGIKEQLIFPEIDFDKVNRTRGLDIVIVTTADTDEEARELLSQFGMPFAR</sequence>
<evidence type="ECO:0000255" key="1">
    <source>
        <dbReference type="HAMAP-Rule" id="MF_01333"/>
    </source>
</evidence>
<evidence type="ECO:0000305" key="2"/>
<accession>Q5FM78</accession>
<gene>
    <name evidence="1" type="primary">rplE</name>
    <name type="ordered locus">LBA0303</name>
</gene>